<dbReference type="EMBL" id="CR382139">
    <property type="protein sequence ID" value="CAG91068.2"/>
    <property type="molecule type" value="Genomic_DNA"/>
</dbReference>
<dbReference type="RefSeq" id="XP_462557.2">
    <property type="nucleotide sequence ID" value="XM_462557.2"/>
</dbReference>
<dbReference type="SMR" id="Q6BGW4"/>
<dbReference type="STRING" id="284592.Q6BGW4"/>
<dbReference type="GeneID" id="2905512"/>
<dbReference type="KEGG" id="dha:DEHA2G23386g"/>
<dbReference type="VEuPathDB" id="FungiDB:DEHA2G23386g"/>
<dbReference type="eggNOG" id="KOG0519">
    <property type="taxonomic scope" value="Eukaryota"/>
</dbReference>
<dbReference type="HOGENOM" id="CLU_065405_0_0_1"/>
<dbReference type="InParanoid" id="Q6BGW4"/>
<dbReference type="OMA" id="CKWATSA"/>
<dbReference type="OrthoDB" id="303614at2759"/>
<dbReference type="Proteomes" id="UP000000599">
    <property type="component" value="Chromosome G"/>
</dbReference>
<dbReference type="GO" id="GO:0036180">
    <property type="term" value="P:filamentous growth of a population of unicellular organisms in response to biotic stimulus"/>
    <property type="evidence" value="ECO:0007669"/>
    <property type="project" value="UniProtKB-ARBA"/>
</dbReference>
<dbReference type="GO" id="GO:0000160">
    <property type="term" value="P:phosphorelay signal transduction system"/>
    <property type="evidence" value="ECO:0007669"/>
    <property type="project" value="InterPro"/>
</dbReference>
<dbReference type="GO" id="GO:1900445">
    <property type="term" value="P:positive regulation of filamentous growth of a population of unicellular organisms in response to biotic stimulus"/>
    <property type="evidence" value="ECO:0007669"/>
    <property type="project" value="UniProtKB-ARBA"/>
</dbReference>
<dbReference type="CDD" id="cd17546">
    <property type="entry name" value="REC_hyHK_CKI1_RcsC-like"/>
    <property type="match status" value="1"/>
</dbReference>
<dbReference type="Gene3D" id="3.40.50.2300">
    <property type="match status" value="1"/>
</dbReference>
<dbReference type="InterPro" id="IPR050595">
    <property type="entry name" value="Bact_response_regulator"/>
</dbReference>
<dbReference type="InterPro" id="IPR011006">
    <property type="entry name" value="CheY-like_superfamily"/>
</dbReference>
<dbReference type="InterPro" id="IPR001789">
    <property type="entry name" value="Sig_transdc_resp-reg_receiver"/>
</dbReference>
<dbReference type="PANTHER" id="PTHR44591:SF3">
    <property type="entry name" value="RESPONSE REGULATORY DOMAIN-CONTAINING PROTEIN"/>
    <property type="match status" value="1"/>
</dbReference>
<dbReference type="PANTHER" id="PTHR44591">
    <property type="entry name" value="STRESS RESPONSE REGULATOR PROTEIN 1"/>
    <property type="match status" value="1"/>
</dbReference>
<dbReference type="Pfam" id="PF00072">
    <property type="entry name" value="Response_reg"/>
    <property type="match status" value="1"/>
</dbReference>
<dbReference type="SMART" id="SM00448">
    <property type="entry name" value="REC"/>
    <property type="match status" value="1"/>
</dbReference>
<dbReference type="SUPFAM" id="SSF52172">
    <property type="entry name" value="CheY-like"/>
    <property type="match status" value="1"/>
</dbReference>
<dbReference type="PROSITE" id="PS50110">
    <property type="entry name" value="RESPONSE_REGULATORY"/>
    <property type="match status" value="1"/>
</dbReference>
<sequence length="242" mass="27588">MDQVQFDFDSKSSCSTQTRHSANIFNKTNNMIYNNQLGTPPALPSPDYDYRMDYFHYKPVSGDVRDESADMVEAEYVDCDLKPKLSVDVNTFGGNQQFISPIELGEYKKFTPNTNPYNFLLVDDNFINLKILERVLLKLYPNCTIVKTQDSTKIMALLHSQTFDVAFLDIEMPGLTGIELAKMIRMEDKLNQVGIIAVTTKSLPCDKIIYEQAGIDHTFAKPLNYSFDHIITCIEKVLRAKI</sequence>
<organism>
    <name type="scientific">Debaryomyces hansenii (strain ATCC 36239 / CBS 767 / BCRC 21394 / JCM 1990 / NBRC 0083 / IGC 2968)</name>
    <name type="common">Yeast</name>
    <name type="synonym">Torulaspora hansenii</name>
    <dbReference type="NCBI Taxonomy" id="284592"/>
    <lineage>
        <taxon>Eukaryota</taxon>
        <taxon>Fungi</taxon>
        <taxon>Dikarya</taxon>
        <taxon>Ascomycota</taxon>
        <taxon>Saccharomycotina</taxon>
        <taxon>Pichiomycetes</taxon>
        <taxon>Debaryomycetaceae</taxon>
        <taxon>Debaryomyces</taxon>
    </lineage>
</organism>
<feature type="chain" id="PRO_0000413390" description="Stress response regulator protein 1">
    <location>
        <begin position="1"/>
        <end position="242"/>
    </location>
</feature>
<feature type="domain" description="Response regulatory" evidence="2">
    <location>
        <begin position="118"/>
        <end position="236"/>
    </location>
</feature>
<feature type="modified residue" description="4-aspartylphosphate" evidence="2">
    <location>
        <position position="169"/>
    </location>
</feature>
<protein>
    <recommendedName>
        <fullName>Stress response regulator protein 1</fullName>
    </recommendedName>
</protein>
<accession>Q6BGW4</accession>
<name>SRR1_DEBHA</name>
<keyword id="KW-0597">Phosphoprotein</keyword>
<keyword id="KW-1185">Reference proteome</keyword>
<evidence type="ECO:0000250" key="1"/>
<evidence type="ECO:0000255" key="2">
    <source>
        <dbReference type="PROSITE-ProRule" id="PRU00169"/>
    </source>
</evidence>
<reference key="1">
    <citation type="journal article" date="2004" name="Nature">
        <title>Genome evolution in yeasts.</title>
        <authorList>
            <person name="Dujon B."/>
            <person name="Sherman D."/>
            <person name="Fischer G."/>
            <person name="Durrens P."/>
            <person name="Casaregola S."/>
            <person name="Lafontaine I."/>
            <person name="de Montigny J."/>
            <person name="Marck C."/>
            <person name="Neuveglise C."/>
            <person name="Talla E."/>
            <person name="Goffard N."/>
            <person name="Frangeul L."/>
            <person name="Aigle M."/>
            <person name="Anthouard V."/>
            <person name="Babour A."/>
            <person name="Barbe V."/>
            <person name="Barnay S."/>
            <person name="Blanchin S."/>
            <person name="Beckerich J.-M."/>
            <person name="Beyne E."/>
            <person name="Bleykasten C."/>
            <person name="Boisrame A."/>
            <person name="Boyer J."/>
            <person name="Cattolico L."/>
            <person name="Confanioleri F."/>
            <person name="de Daruvar A."/>
            <person name="Despons L."/>
            <person name="Fabre E."/>
            <person name="Fairhead C."/>
            <person name="Ferry-Dumazet H."/>
            <person name="Groppi A."/>
            <person name="Hantraye F."/>
            <person name="Hennequin C."/>
            <person name="Jauniaux N."/>
            <person name="Joyet P."/>
            <person name="Kachouri R."/>
            <person name="Kerrest A."/>
            <person name="Koszul R."/>
            <person name="Lemaire M."/>
            <person name="Lesur I."/>
            <person name="Ma L."/>
            <person name="Muller H."/>
            <person name="Nicaud J.-M."/>
            <person name="Nikolski M."/>
            <person name="Oztas S."/>
            <person name="Ozier-Kalogeropoulos O."/>
            <person name="Pellenz S."/>
            <person name="Potier S."/>
            <person name="Richard G.-F."/>
            <person name="Straub M.-L."/>
            <person name="Suleau A."/>
            <person name="Swennen D."/>
            <person name="Tekaia F."/>
            <person name="Wesolowski-Louvel M."/>
            <person name="Westhof E."/>
            <person name="Wirth B."/>
            <person name="Zeniou-Meyer M."/>
            <person name="Zivanovic Y."/>
            <person name="Bolotin-Fukuhara M."/>
            <person name="Thierry A."/>
            <person name="Bouchier C."/>
            <person name="Caudron B."/>
            <person name="Scarpelli C."/>
            <person name="Gaillardin C."/>
            <person name="Weissenbach J."/>
            <person name="Wincker P."/>
            <person name="Souciet J.-L."/>
        </authorList>
    </citation>
    <scope>NUCLEOTIDE SEQUENCE [LARGE SCALE GENOMIC DNA]</scope>
    <source>
        <strain>ATCC 36239 / CBS 767 / BCRC 21394 / JCM 1990 / NBRC 0083 / IGC 2968</strain>
    </source>
</reference>
<proteinExistence type="inferred from homology"/>
<comment type="function">
    <text evidence="1">Required for stress adaptation, morphogenesis and virulence.</text>
</comment>
<gene>
    <name type="primary">SRR1</name>
    <name type="ordered locus">DEHA2G23386g</name>
</gene>